<protein>
    <recommendedName>
        <fullName evidence="1">Outer-membrane lipoprotein LolB</fullName>
    </recommendedName>
</protein>
<reference key="1">
    <citation type="journal article" date="2008" name="Genome Res.">
        <title>Comparative genome analysis of Salmonella enteritidis PT4 and Salmonella gallinarum 287/91 provides insights into evolutionary and host adaptation pathways.</title>
        <authorList>
            <person name="Thomson N.R."/>
            <person name="Clayton D.J."/>
            <person name="Windhorst D."/>
            <person name="Vernikos G."/>
            <person name="Davidson S."/>
            <person name="Churcher C."/>
            <person name="Quail M.A."/>
            <person name="Stevens M."/>
            <person name="Jones M.A."/>
            <person name="Watson M."/>
            <person name="Barron A."/>
            <person name="Layton A."/>
            <person name="Pickard D."/>
            <person name="Kingsley R.A."/>
            <person name="Bignell A."/>
            <person name="Clark L."/>
            <person name="Harris B."/>
            <person name="Ormond D."/>
            <person name="Abdellah Z."/>
            <person name="Brooks K."/>
            <person name="Cherevach I."/>
            <person name="Chillingworth T."/>
            <person name="Woodward J."/>
            <person name="Norberczak H."/>
            <person name="Lord A."/>
            <person name="Arrowsmith C."/>
            <person name="Jagels K."/>
            <person name="Moule S."/>
            <person name="Mungall K."/>
            <person name="Saunders M."/>
            <person name="Whitehead S."/>
            <person name="Chabalgoity J.A."/>
            <person name="Maskell D."/>
            <person name="Humphreys T."/>
            <person name="Roberts M."/>
            <person name="Barrow P.A."/>
            <person name="Dougan G."/>
            <person name="Parkhill J."/>
        </authorList>
    </citation>
    <scope>NUCLEOTIDE SEQUENCE [LARGE SCALE GENOMIC DNA]</scope>
    <source>
        <strain>287/91 / NCTC 13346</strain>
    </source>
</reference>
<organism>
    <name type="scientific">Salmonella gallinarum (strain 287/91 / NCTC 13346)</name>
    <dbReference type="NCBI Taxonomy" id="550538"/>
    <lineage>
        <taxon>Bacteria</taxon>
        <taxon>Pseudomonadati</taxon>
        <taxon>Pseudomonadota</taxon>
        <taxon>Gammaproteobacteria</taxon>
        <taxon>Enterobacterales</taxon>
        <taxon>Enterobacteriaceae</taxon>
        <taxon>Salmonella</taxon>
    </lineage>
</organism>
<dbReference type="EMBL" id="AM933173">
    <property type="protein sequence ID" value="CAR37215.1"/>
    <property type="molecule type" value="Genomic_DNA"/>
</dbReference>
<dbReference type="RefSeq" id="WP_000174484.1">
    <property type="nucleotide sequence ID" value="NC_011274.1"/>
</dbReference>
<dbReference type="SMR" id="B5R922"/>
<dbReference type="KEGG" id="seg:SG1339"/>
<dbReference type="HOGENOM" id="CLU_092816_1_1_6"/>
<dbReference type="Proteomes" id="UP000008321">
    <property type="component" value="Chromosome"/>
</dbReference>
<dbReference type="GO" id="GO:0009279">
    <property type="term" value="C:cell outer membrane"/>
    <property type="evidence" value="ECO:0007669"/>
    <property type="project" value="UniProtKB-SubCell"/>
</dbReference>
<dbReference type="GO" id="GO:0044874">
    <property type="term" value="P:lipoprotein localization to outer membrane"/>
    <property type="evidence" value="ECO:0007669"/>
    <property type="project" value="UniProtKB-UniRule"/>
</dbReference>
<dbReference type="GO" id="GO:0015031">
    <property type="term" value="P:protein transport"/>
    <property type="evidence" value="ECO:0007669"/>
    <property type="project" value="UniProtKB-KW"/>
</dbReference>
<dbReference type="CDD" id="cd16326">
    <property type="entry name" value="LolB"/>
    <property type="match status" value="1"/>
</dbReference>
<dbReference type="FunFam" id="2.50.20.10:FF:000002">
    <property type="entry name" value="Outer-membrane lipoprotein LolB"/>
    <property type="match status" value="1"/>
</dbReference>
<dbReference type="Gene3D" id="2.50.20.10">
    <property type="entry name" value="Lipoprotein localisation LolA/LolB/LppX"/>
    <property type="match status" value="1"/>
</dbReference>
<dbReference type="HAMAP" id="MF_00233">
    <property type="entry name" value="LolB"/>
    <property type="match status" value="1"/>
</dbReference>
<dbReference type="InterPro" id="IPR029046">
    <property type="entry name" value="LolA/LolB/LppX"/>
</dbReference>
<dbReference type="InterPro" id="IPR004565">
    <property type="entry name" value="OM_lipoprot_LolB"/>
</dbReference>
<dbReference type="NCBIfam" id="TIGR00548">
    <property type="entry name" value="lolB"/>
    <property type="match status" value="1"/>
</dbReference>
<dbReference type="Pfam" id="PF03550">
    <property type="entry name" value="LolB"/>
    <property type="match status" value="1"/>
</dbReference>
<dbReference type="SUPFAM" id="SSF89392">
    <property type="entry name" value="Prokaryotic lipoproteins and lipoprotein localization factors"/>
    <property type="match status" value="1"/>
</dbReference>
<dbReference type="PROSITE" id="PS51257">
    <property type="entry name" value="PROKAR_LIPOPROTEIN"/>
    <property type="match status" value="1"/>
</dbReference>
<sequence>MTLPDFRLIRLLPLASLVLTACTLPGHKGPGKSPDSPQWRQHQQEVRHLNQYQTRGAFAYISDDQKVYARFFWQQTGQDRYRLLLTNPLGSTELELNAQPGNVQLVDNKGQRYTADDAEEMIGKLTGMPIPLNSLRQWILGLPGDATDYKLDDQYRLSEVNYRQDGKNWKVVYGGYDSKTQPAMPANMELSDGSQRIKLKMDNWIVK</sequence>
<keyword id="KW-0998">Cell outer membrane</keyword>
<keyword id="KW-0143">Chaperone</keyword>
<keyword id="KW-0449">Lipoprotein</keyword>
<keyword id="KW-0472">Membrane</keyword>
<keyword id="KW-0564">Palmitate</keyword>
<keyword id="KW-0653">Protein transport</keyword>
<keyword id="KW-0732">Signal</keyword>
<keyword id="KW-0813">Transport</keyword>
<name>LOLB_SALG2</name>
<evidence type="ECO:0000255" key="1">
    <source>
        <dbReference type="HAMAP-Rule" id="MF_00233"/>
    </source>
</evidence>
<gene>
    <name evidence="1" type="primary">lolB</name>
    <name type="ordered locus">SG1339</name>
</gene>
<feature type="signal peptide" evidence="1">
    <location>
        <begin position="1"/>
        <end position="21"/>
    </location>
</feature>
<feature type="chain" id="PRO_1000100505" description="Outer-membrane lipoprotein LolB">
    <location>
        <begin position="22"/>
        <end position="207"/>
    </location>
</feature>
<feature type="lipid moiety-binding region" description="N-palmitoyl cysteine" evidence="1">
    <location>
        <position position="22"/>
    </location>
</feature>
<feature type="lipid moiety-binding region" description="S-diacylglycerol cysteine" evidence="1">
    <location>
        <position position="22"/>
    </location>
</feature>
<accession>B5R922</accession>
<comment type="function">
    <text evidence="1">Plays a critical role in the incorporation of lipoproteins in the outer membrane after they are released by the LolA protein.</text>
</comment>
<comment type="subunit">
    <text evidence="1">Monomer.</text>
</comment>
<comment type="subcellular location">
    <subcellularLocation>
        <location evidence="1">Cell outer membrane</location>
        <topology evidence="1">Lipid-anchor</topology>
    </subcellularLocation>
</comment>
<comment type="similarity">
    <text evidence="1">Belongs to the LolB family.</text>
</comment>
<proteinExistence type="inferred from homology"/>